<evidence type="ECO:0000250" key="1">
    <source>
        <dbReference type="UniProtKB" id="P17987"/>
    </source>
</evidence>
<evidence type="ECO:0000255" key="2"/>
<evidence type="ECO:0000305" key="3"/>
<accession>P86208</accession>
<gene>
    <name evidence="1" type="primary">TCP1</name>
    <name evidence="1" type="synonym">CCT1</name>
</gene>
<reference key="1">
    <citation type="journal article" date="2010" name="Asian J. Androl.">
        <title>Glucose-regulated protein precursor (GRP78) and tumor rejection antigen (GP96) are unique to hamster caput epididymal spermatozoa.</title>
        <authorList>
            <person name="Kameshwari D.B."/>
            <person name="Bhande S."/>
            <person name="Sundaram C.S."/>
            <person name="Kota V."/>
            <person name="Siva A.B."/>
            <person name="Shivaji S."/>
        </authorList>
    </citation>
    <scope>IDENTIFICATION BY MASS SPECTROMETRY</scope>
</reference>
<dbReference type="EC" id="3.6.1.-" evidence="1"/>
<dbReference type="SMR" id="P86208"/>
<dbReference type="Proteomes" id="UP000189706">
    <property type="component" value="Unplaced"/>
</dbReference>
<dbReference type="GO" id="GO:0005813">
    <property type="term" value="C:centrosome"/>
    <property type="evidence" value="ECO:0007669"/>
    <property type="project" value="UniProtKB-SubCell"/>
</dbReference>
<dbReference type="GO" id="GO:0005832">
    <property type="term" value="C:chaperonin-containing T-complex"/>
    <property type="evidence" value="ECO:0000250"/>
    <property type="project" value="UniProtKB"/>
</dbReference>
<dbReference type="GO" id="GO:0005524">
    <property type="term" value="F:ATP binding"/>
    <property type="evidence" value="ECO:0007669"/>
    <property type="project" value="UniProtKB-KW"/>
</dbReference>
<dbReference type="Gene3D" id="1.10.560.10">
    <property type="entry name" value="GroEL-like equatorial domain"/>
    <property type="match status" value="1"/>
</dbReference>
<dbReference type="InterPro" id="IPR002423">
    <property type="entry name" value="Cpn60/GroEL/TCP-1"/>
</dbReference>
<dbReference type="InterPro" id="IPR027413">
    <property type="entry name" value="GROEL-like_equatorial_sf"/>
</dbReference>
<dbReference type="Pfam" id="PF00118">
    <property type="entry name" value="Cpn60_TCP1"/>
    <property type="match status" value="1"/>
</dbReference>
<dbReference type="SUPFAM" id="SSF48592">
    <property type="entry name" value="GroEL equatorial domain-like"/>
    <property type="match status" value="1"/>
</dbReference>
<organism>
    <name type="scientific">Mesocricetus auratus</name>
    <name type="common">Golden hamster</name>
    <dbReference type="NCBI Taxonomy" id="10036"/>
    <lineage>
        <taxon>Eukaryota</taxon>
        <taxon>Metazoa</taxon>
        <taxon>Chordata</taxon>
        <taxon>Craniata</taxon>
        <taxon>Vertebrata</taxon>
        <taxon>Euteleostomi</taxon>
        <taxon>Mammalia</taxon>
        <taxon>Eutheria</taxon>
        <taxon>Euarchontoglires</taxon>
        <taxon>Glires</taxon>
        <taxon>Rodentia</taxon>
        <taxon>Myomorpha</taxon>
        <taxon>Muroidea</taxon>
        <taxon>Cricetidae</taxon>
        <taxon>Cricetinae</taxon>
        <taxon>Mesocricetus</taxon>
    </lineage>
</organism>
<feature type="chain" id="PRO_0000394300" description="T-complex protein 1 subunit alpha">
    <location>
        <begin position="1" status="less than"/>
        <end position="123" status="greater than"/>
    </location>
</feature>
<feature type="binding site" evidence="1">
    <location>
        <position position="68"/>
    </location>
    <ligand>
        <name>ADP</name>
        <dbReference type="ChEBI" id="CHEBI:456216"/>
    </ligand>
</feature>
<feature type="non-consecutive residues" evidence="3">
    <location>
        <begin position="11"/>
        <end position="12"/>
    </location>
</feature>
<feature type="non-consecutive residues" evidence="3">
    <location>
        <begin position="34"/>
        <end position="35"/>
    </location>
</feature>
<feature type="non-consecutive residues" evidence="3">
    <location>
        <begin position="51"/>
        <end position="52"/>
    </location>
</feature>
<feature type="non-consecutive residues" evidence="3">
    <location>
        <begin position="62"/>
        <end position="63"/>
    </location>
</feature>
<feature type="non-consecutive residues" evidence="3">
    <location>
        <begin position="99"/>
        <end position="100"/>
    </location>
</feature>
<feature type="non-consecutive residues" evidence="3">
    <location>
        <begin position="112"/>
        <end position="113"/>
    </location>
</feature>
<feature type="non-terminal residue">
    <location>
        <position position="1"/>
    </location>
</feature>
<feature type="non-terminal residue">
    <location>
        <position position="123"/>
    </location>
</feature>
<sequence length="123" mass="13411">IHPTSVISGYRYISENLIINTDELGRDCLINAAKLGVQVVITDPEKLDQIRYFVEAGAMAVRSVVPGGGAVEAALSIYLENYATSMGSREQLAIAEFARAFHNEAQVNPERKFATEAAITILR</sequence>
<protein>
    <recommendedName>
        <fullName evidence="1">T-complex protein 1 subunit alpha</fullName>
        <shortName evidence="1">TCP-1-alpha</shortName>
        <ecNumber evidence="1">3.6.1.-</ecNumber>
    </recommendedName>
    <alternativeName>
        <fullName evidence="1">CCT-alpha</fullName>
    </alternativeName>
</protein>
<proteinExistence type="evidence at protein level"/>
<comment type="function">
    <text evidence="1">Component of the chaperonin-containing T-complex (TRiC), a molecular chaperone complex that assists the folding of actin, tubulin and other proteins upon ATP hydrolysis. The TRiC complex mediates the folding of WRAP53/TCAB1, thereby regulating telomere maintenance. As part of the TRiC complex may play a role in the assembly of BBSome, a complex involved in ciliogenesis regulating transports vesicles to the cilia.</text>
</comment>
<comment type="catalytic activity">
    <reaction evidence="1">
        <text>ATP + H2O = ADP + phosphate + H(+)</text>
        <dbReference type="Rhea" id="RHEA:13065"/>
        <dbReference type="ChEBI" id="CHEBI:15377"/>
        <dbReference type="ChEBI" id="CHEBI:15378"/>
        <dbReference type="ChEBI" id="CHEBI:30616"/>
        <dbReference type="ChEBI" id="CHEBI:43474"/>
        <dbReference type="ChEBI" id="CHEBI:456216"/>
    </reaction>
</comment>
<comment type="subunit">
    <text evidence="1">Component of the chaperonin-containing T-complex (TRiC), a hexadecamer composed of two identical back-to-back stacked rings enclosing a protein folding chamber. Each ring is made up of eight different subunits: TCP1/CCT1, CCT2, CCT3, CCT4, CCT5, CCT6A/CCT6, CCT7, CCT8. Interacts with PACRG. Interacts with GBA1. Interacts with DLEC1.</text>
</comment>
<comment type="subcellular location">
    <subcellularLocation>
        <location evidence="1">Cytoplasm</location>
        <location evidence="1">Cytosol</location>
    </subcellularLocation>
    <subcellularLocation>
        <location evidence="1">Cytoplasm</location>
        <location evidence="1">Cytoskeleton</location>
        <location evidence="1">Microtubule organizing center</location>
        <location evidence="1">Centrosome</location>
    </subcellularLocation>
</comment>
<comment type="similarity">
    <text evidence="2">Belongs to the TCP-1 chaperonin family.</text>
</comment>
<name>TCPA_MESAU</name>
<keyword id="KW-0067">ATP-binding</keyword>
<keyword id="KW-0143">Chaperone</keyword>
<keyword id="KW-0963">Cytoplasm</keyword>
<keyword id="KW-0206">Cytoskeleton</keyword>
<keyword id="KW-0378">Hydrolase</keyword>
<keyword id="KW-0547">Nucleotide-binding</keyword>
<keyword id="KW-1185">Reference proteome</keyword>